<dbReference type="EC" id="3.1.1.-"/>
<dbReference type="EC" id="3.-.-.-"/>
<dbReference type="EMBL" id="BT020710">
    <property type="protein sequence ID" value="AAX08727.1"/>
    <property type="molecule type" value="mRNA"/>
</dbReference>
<dbReference type="EMBL" id="BC114030">
    <property type="protein sequence ID" value="AAI14031.1"/>
    <property type="molecule type" value="mRNA"/>
</dbReference>
<dbReference type="RefSeq" id="NP_001029540.1">
    <property type="nucleotide sequence ID" value="NM_001034368.1"/>
</dbReference>
<dbReference type="SMR" id="Q5EA59"/>
<dbReference type="FunCoup" id="Q5EA59">
    <property type="interactions" value="2102"/>
</dbReference>
<dbReference type="STRING" id="9913.ENSBTAP00000022154"/>
<dbReference type="ESTHER" id="bovin-abhd4">
    <property type="family name" value="CGI-58_ABHD5_ABHD4"/>
</dbReference>
<dbReference type="PaxDb" id="9913-ENSBTAP00000022154"/>
<dbReference type="GeneID" id="509896"/>
<dbReference type="KEGG" id="bta:509896"/>
<dbReference type="CTD" id="63874"/>
<dbReference type="eggNOG" id="KOG4409">
    <property type="taxonomic scope" value="Eukaryota"/>
</dbReference>
<dbReference type="HOGENOM" id="CLU_017361_0_1_1"/>
<dbReference type="InParanoid" id="Q5EA59"/>
<dbReference type="OrthoDB" id="7457040at2759"/>
<dbReference type="TreeFam" id="TF314196"/>
<dbReference type="Proteomes" id="UP000009136">
    <property type="component" value="Unplaced"/>
</dbReference>
<dbReference type="GO" id="GO:0005811">
    <property type="term" value="C:lipid droplet"/>
    <property type="evidence" value="ECO:0000318"/>
    <property type="project" value="GO_Central"/>
</dbReference>
<dbReference type="GO" id="GO:0005739">
    <property type="term" value="C:mitochondrion"/>
    <property type="evidence" value="ECO:0000318"/>
    <property type="project" value="GO_Central"/>
</dbReference>
<dbReference type="GO" id="GO:0052689">
    <property type="term" value="F:carboxylic ester hydrolase activity"/>
    <property type="evidence" value="ECO:0000318"/>
    <property type="project" value="GO_Central"/>
</dbReference>
<dbReference type="GO" id="GO:0042171">
    <property type="term" value="F:lysophosphatidic acid acyltransferase activity"/>
    <property type="evidence" value="ECO:0000318"/>
    <property type="project" value="GO_Central"/>
</dbReference>
<dbReference type="GO" id="GO:0004622">
    <property type="term" value="F:lysophospholipase activity"/>
    <property type="evidence" value="ECO:0000318"/>
    <property type="project" value="GO_Central"/>
</dbReference>
<dbReference type="GO" id="GO:0016042">
    <property type="term" value="P:lipid catabolic process"/>
    <property type="evidence" value="ECO:0007669"/>
    <property type="project" value="UniProtKB-KW"/>
</dbReference>
<dbReference type="GO" id="GO:0055088">
    <property type="term" value="P:lipid homeostasis"/>
    <property type="evidence" value="ECO:0000318"/>
    <property type="project" value="GO_Central"/>
</dbReference>
<dbReference type="GO" id="GO:0070292">
    <property type="term" value="P:N-acylphosphatidylethanolamine metabolic process"/>
    <property type="evidence" value="ECO:0000250"/>
    <property type="project" value="UniProtKB"/>
</dbReference>
<dbReference type="GO" id="GO:0006654">
    <property type="term" value="P:phosphatidic acid biosynthetic process"/>
    <property type="evidence" value="ECO:0000318"/>
    <property type="project" value="GO_Central"/>
</dbReference>
<dbReference type="FunFam" id="3.40.50.1820:FF:000044">
    <property type="entry name" value="Abhydrolase domain containing 4"/>
    <property type="match status" value="1"/>
</dbReference>
<dbReference type="Gene3D" id="3.40.50.1820">
    <property type="entry name" value="alpha/beta hydrolase"/>
    <property type="match status" value="1"/>
</dbReference>
<dbReference type="InterPro" id="IPR000073">
    <property type="entry name" value="AB_hydrolase_1"/>
</dbReference>
<dbReference type="InterPro" id="IPR029058">
    <property type="entry name" value="AB_hydrolase_fold"/>
</dbReference>
<dbReference type="PANTHER" id="PTHR42886:SF21">
    <property type="entry name" value="(LYSO)-N-ACYLPHOSPHATIDYLETHANOLAMINE LIPASE"/>
    <property type="match status" value="1"/>
</dbReference>
<dbReference type="PANTHER" id="PTHR42886">
    <property type="entry name" value="RE40534P-RELATED"/>
    <property type="match status" value="1"/>
</dbReference>
<dbReference type="Pfam" id="PF00561">
    <property type="entry name" value="Abhydrolase_1"/>
    <property type="match status" value="1"/>
</dbReference>
<dbReference type="PRINTS" id="PR00111">
    <property type="entry name" value="ABHYDROLASE"/>
</dbReference>
<dbReference type="SUPFAM" id="SSF53474">
    <property type="entry name" value="alpha/beta-Hydrolases"/>
    <property type="match status" value="1"/>
</dbReference>
<protein>
    <recommendedName>
        <fullName evidence="4">(Lyso)-N-acylphosphatidylethanolamine lipase</fullName>
        <ecNumber>3.1.1.-</ecNumber>
    </recommendedName>
    <alternativeName>
        <fullName evidence="4">Alpha/beta hydrolase domain-containing protein 4</fullName>
        <shortName evidence="1">Abhydrolase domain-containing protein 4</shortName>
    </alternativeName>
    <alternativeName>
        <fullName>Alpha/beta-hydrolase 4</fullName>
    </alternativeName>
    <alternativeName>
        <fullName evidence="4">Protein ABHD4</fullName>
        <ecNumber>3.-.-.-</ecNumber>
    </alternativeName>
</protein>
<sequence>MADDLEQQPQGWLSSWLPTWRPTSMSQLKNVEARILQCLQNKFLARYVSLPNQNKIWTVTVSPELRDRTPLVMVHGFGGGVGLWILNMDSLSTRRTLHTFDLLGFGRSSRPTFPRDPEGAEDEFVTSIETWRESMGIPSMILLGHSLGGFLATSYSIKYPDRVKHLILVDPWGFPLRPADPSQVRAPPTWVKAVASVLGRSNPLAVLRVAGPWGPGLVQRFRPDFKRKFADFFDDDTISEYIYHCNAQNPSGETAFKAMMESFGWARRPMLERIHLIRKDVPITMIYGANTWIDTSTGKKVKLQRPDSYVRDLEIEGASHHVYADQPHIFNAVVEEICDSVD</sequence>
<keyword id="KW-0378">Hydrolase</keyword>
<keyword id="KW-0442">Lipid degradation</keyword>
<keyword id="KW-0443">Lipid metabolism</keyword>
<keyword id="KW-1185">Reference proteome</keyword>
<proteinExistence type="evidence at transcript level"/>
<name>ABHD4_BOVIN</name>
<accession>Q5EA59</accession>
<accession>Q24K17</accession>
<comment type="function">
    <text evidence="2">Lysophospholipase selective for N-acyl phosphatidylethanolamine (NAPE). Contributes to the biosynthesis of N-acyl ethanolamines, including the endocannabinoid anandamide by hydrolyzing the sn-1 and sn-2 acyl chains from N-acyl phosphatidylethanolamine (NAPE) generating glycerophospho-N-acyl ethanolamine (GP-NAE), an intermediate for N-acyl ethanolamine biosynthesis. Hydrolyzes substrates bearing saturated, monounsaturated, polyunsaturated N-acyl chains. Shows no significant activity towards other lysophospholipids, including lysophosphatidylcholine, lysophosphatidylethanolamine and lysophosphatidylserine.</text>
</comment>
<comment type="catalytic activity">
    <reaction evidence="2">
        <text>N-hexadecanoyl-1,2-di-(9Z-octadecenoyl)-sn-glycero-3-phosphoethanolamine + H2O = N-hexadecanoyl-1-(9Z-octadecenoyl)-sn-glycero-3-phosphoethanolamine + (9Z)-octadecenoate + H(+)</text>
        <dbReference type="Rhea" id="RHEA:45424"/>
        <dbReference type="ChEBI" id="CHEBI:15377"/>
        <dbReference type="ChEBI" id="CHEBI:15378"/>
        <dbReference type="ChEBI" id="CHEBI:30823"/>
        <dbReference type="ChEBI" id="CHEBI:78097"/>
        <dbReference type="ChEBI" id="CHEBI:85217"/>
    </reaction>
    <physiologicalReaction direction="left-to-right" evidence="2">
        <dbReference type="Rhea" id="RHEA:45425"/>
    </physiologicalReaction>
</comment>
<comment type="catalytic activity">
    <reaction evidence="2">
        <text>an N-acyl-1,2-diacyl-sn-glycero-3-phosphoethanolamine + H2O = N,1-diacyl-sn-glycero-3-phosphoethanolamine + a fatty acid + H(+)</text>
        <dbReference type="Rhea" id="RHEA:45460"/>
        <dbReference type="ChEBI" id="CHEBI:15377"/>
        <dbReference type="ChEBI" id="CHEBI:15378"/>
        <dbReference type="ChEBI" id="CHEBI:28868"/>
        <dbReference type="ChEBI" id="CHEBI:62537"/>
        <dbReference type="ChEBI" id="CHEBI:85216"/>
    </reaction>
    <physiologicalReaction direction="left-to-right" evidence="2">
        <dbReference type="Rhea" id="RHEA:45461"/>
    </physiologicalReaction>
</comment>
<comment type="catalytic activity">
    <reaction evidence="2">
        <text>N-hexadecanoyl-1-(9Z-octadecenoyl)-sn-glycero-3-phosphoethanolamine + H2O = N-hexadecanoyl-sn-glycero-3-phosphoethanolamine + (9Z)-octadecenoate + H(+)</text>
        <dbReference type="Rhea" id="RHEA:45384"/>
        <dbReference type="ChEBI" id="CHEBI:15377"/>
        <dbReference type="ChEBI" id="CHEBI:15378"/>
        <dbReference type="ChEBI" id="CHEBI:30823"/>
        <dbReference type="ChEBI" id="CHEBI:85217"/>
        <dbReference type="ChEBI" id="CHEBI:85226"/>
    </reaction>
    <physiologicalReaction direction="left-to-right" evidence="2">
        <dbReference type="Rhea" id="RHEA:45385"/>
    </physiologicalReaction>
</comment>
<comment type="catalytic activity">
    <reaction evidence="2">
        <text>N-octadecanoyl-1-(9Z-octadecenoyl)-sn-glycero-3-phosphoethanolamine + H2O = N-octadecanoyl-sn-glycero-3-phospho-ethanolamine + (9Z)-octadecenoate + H(+)</text>
        <dbReference type="Rhea" id="RHEA:45388"/>
        <dbReference type="ChEBI" id="CHEBI:15377"/>
        <dbReference type="ChEBI" id="CHEBI:15378"/>
        <dbReference type="ChEBI" id="CHEBI:30823"/>
        <dbReference type="ChEBI" id="CHEBI:85219"/>
        <dbReference type="ChEBI" id="CHEBI:85227"/>
    </reaction>
    <physiologicalReaction direction="left-to-right" evidence="2">
        <dbReference type="Rhea" id="RHEA:45389"/>
    </physiologicalReaction>
</comment>
<comment type="catalytic activity">
    <reaction evidence="2">
        <text>N-eicosanoyl-1-(9Z-octadecenoyl)-sn-glycero-3-phosphoethanolamine + H2O = N-eicosanoyl-sn-glycero-3-phosphoethanolamine + (9Z)-octadecenoate + H(+)</text>
        <dbReference type="Rhea" id="RHEA:45392"/>
        <dbReference type="ChEBI" id="CHEBI:15377"/>
        <dbReference type="ChEBI" id="CHEBI:15378"/>
        <dbReference type="ChEBI" id="CHEBI:30823"/>
        <dbReference type="ChEBI" id="CHEBI:85221"/>
        <dbReference type="ChEBI" id="CHEBI:85228"/>
    </reaction>
    <physiologicalReaction direction="left-to-right" evidence="2">
        <dbReference type="Rhea" id="RHEA:45393"/>
    </physiologicalReaction>
</comment>
<comment type="catalytic activity">
    <reaction evidence="2">
        <text>N,1-di-(9Z-octadecenoyl)-sn-glycero-3-phosphoethanolamine + H2O = N-(9Z-octadecenoyl)-sn-glycero-3-phosphoethanolamine + (9Z)-octadecenoate + H(+)</text>
        <dbReference type="Rhea" id="RHEA:45396"/>
        <dbReference type="ChEBI" id="CHEBI:15377"/>
        <dbReference type="ChEBI" id="CHEBI:15378"/>
        <dbReference type="ChEBI" id="CHEBI:30823"/>
        <dbReference type="ChEBI" id="CHEBI:85222"/>
        <dbReference type="ChEBI" id="CHEBI:85229"/>
    </reaction>
    <physiologicalReaction direction="left-to-right" evidence="2">
        <dbReference type="Rhea" id="RHEA:45397"/>
    </physiologicalReaction>
</comment>
<comment type="catalytic activity">
    <reaction evidence="2">
        <text>N-(5Z,8Z,11Z,14Z-eicosatetraenoyl)-1-(9Z-octadecenoyl)-sn-glycero-3-phosphoethanolamine + H2O = N-(5Z,8Z,11Z,14Z-eicosatetraenoyl)-sn-glycero-3-phosphoethanolamine + (9Z)-octadecenoate + H(+)</text>
        <dbReference type="Rhea" id="RHEA:45400"/>
        <dbReference type="ChEBI" id="CHEBI:15377"/>
        <dbReference type="ChEBI" id="CHEBI:15378"/>
        <dbReference type="ChEBI" id="CHEBI:30823"/>
        <dbReference type="ChEBI" id="CHEBI:85223"/>
        <dbReference type="ChEBI" id="CHEBI:85230"/>
    </reaction>
    <physiologicalReaction direction="left-to-right" evidence="2">
        <dbReference type="Rhea" id="RHEA:45401"/>
    </physiologicalReaction>
</comment>
<comment type="catalytic activity">
    <reaction evidence="2">
        <text>1-octadecanoyl-2-(9Z-octadecenoyl)-sn-glycero-3-phospho-(N-hexadecanoyl)-serine + H2O = 1-octadecanoyl-2-hydroxy-sn-glycero-3-phospho-(N-hexadecanoyl)-serine + (9Z)-octadecenoate + H(+)</text>
        <dbReference type="Rhea" id="RHEA:55236"/>
        <dbReference type="ChEBI" id="CHEBI:15377"/>
        <dbReference type="ChEBI" id="CHEBI:15378"/>
        <dbReference type="ChEBI" id="CHEBI:30823"/>
        <dbReference type="ChEBI" id="CHEBI:138661"/>
        <dbReference type="ChEBI" id="CHEBI:138662"/>
    </reaction>
    <physiologicalReaction direction="left-to-right" evidence="2">
        <dbReference type="Rhea" id="RHEA:55237"/>
    </physiologicalReaction>
</comment>
<comment type="catalytic activity">
    <reaction evidence="2">
        <text>1-O-(1Z-octadecenoyl)-2-(9Z-octadecenoyl)-sn-glycero-3-phospho-N-hexadecanoyl-ethanolamine + H2O = 1-O-(1Z-octadecenyl)-sn-glycero-3-phospho-N-hexadecanoyl-ethanolamine + (9Z)-octadecenoate + H(+)</text>
        <dbReference type="Rhea" id="RHEA:55240"/>
        <dbReference type="ChEBI" id="CHEBI:15377"/>
        <dbReference type="ChEBI" id="CHEBI:15378"/>
        <dbReference type="ChEBI" id="CHEBI:30823"/>
        <dbReference type="ChEBI" id="CHEBI:137009"/>
        <dbReference type="ChEBI" id="CHEBI:138663"/>
    </reaction>
    <physiologicalReaction direction="left-to-right" evidence="2">
        <dbReference type="Rhea" id="RHEA:55241"/>
    </physiologicalReaction>
</comment>
<comment type="catalytic activity">
    <reaction evidence="2">
        <text>N,1-diacyl-sn-glycero-3-phosphoethanolamine + H2O = N-acyl-sn-glycero-3-phosphoethanolamine + a fatty acid + H(+)</text>
        <dbReference type="Rhea" id="RHEA:45420"/>
        <dbReference type="ChEBI" id="CHEBI:15377"/>
        <dbReference type="ChEBI" id="CHEBI:15378"/>
        <dbReference type="ChEBI" id="CHEBI:28868"/>
        <dbReference type="ChEBI" id="CHEBI:85216"/>
        <dbReference type="ChEBI" id="CHEBI:85225"/>
    </reaction>
    <physiologicalReaction direction="left-to-right" evidence="2">
        <dbReference type="Rhea" id="RHEA:45421"/>
    </physiologicalReaction>
</comment>
<comment type="similarity">
    <text evidence="4">Belongs to the peptidase S33 family. ABHD4/ABHD5 subfamily.</text>
</comment>
<comment type="caution">
    <text evidence="4">Thr-291 is present instead of the conserved His which is expected to be an active site residue.</text>
</comment>
<feature type="chain" id="PRO_0000080863" description="(Lyso)-N-acylphosphatidylethanolamine lipase">
    <location>
        <begin position="1"/>
        <end position="342"/>
    </location>
</feature>
<feature type="domain" description="AB hydrolase-1" evidence="3">
    <location>
        <begin position="70"/>
        <end position="324"/>
    </location>
</feature>
<reference key="1">
    <citation type="journal article" date="2005" name="BMC Genomics">
        <title>Characterization of 954 bovine full-CDS cDNA sequences.</title>
        <authorList>
            <person name="Harhay G.P."/>
            <person name="Sonstegard T.S."/>
            <person name="Keele J.W."/>
            <person name="Heaton M.P."/>
            <person name="Clawson M.L."/>
            <person name="Snelling W.M."/>
            <person name="Wiedmann R.T."/>
            <person name="Van Tassell C.P."/>
            <person name="Smith T.P.L."/>
        </authorList>
    </citation>
    <scope>NUCLEOTIDE SEQUENCE [LARGE SCALE MRNA]</scope>
</reference>
<reference key="2">
    <citation type="submission" date="2006-02" db="EMBL/GenBank/DDBJ databases">
        <authorList>
            <consortium name="NIH - Mammalian Gene Collection (MGC) project"/>
        </authorList>
    </citation>
    <scope>NUCLEOTIDE SEQUENCE [LARGE SCALE MRNA]</scope>
    <source>
        <strain>Hereford</strain>
        <tissue>Testis</tissue>
    </source>
</reference>
<organism>
    <name type="scientific">Bos taurus</name>
    <name type="common">Bovine</name>
    <dbReference type="NCBI Taxonomy" id="9913"/>
    <lineage>
        <taxon>Eukaryota</taxon>
        <taxon>Metazoa</taxon>
        <taxon>Chordata</taxon>
        <taxon>Craniata</taxon>
        <taxon>Vertebrata</taxon>
        <taxon>Euteleostomi</taxon>
        <taxon>Mammalia</taxon>
        <taxon>Eutheria</taxon>
        <taxon>Laurasiatheria</taxon>
        <taxon>Artiodactyla</taxon>
        <taxon>Ruminantia</taxon>
        <taxon>Pecora</taxon>
        <taxon>Bovidae</taxon>
        <taxon>Bovinae</taxon>
        <taxon>Bos</taxon>
    </lineage>
</organism>
<evidence type="ECO:0000250" key="1">
    <source>
        <dbReference type="UniProtKB" id="Q8TB40"/>
    </source>
</evidence>
<evidence type="ECO:0000250" key="2">
    <source>
        <dbReference type="UniProtKB" id="Q8VD66"/>
    </source>
</evidence>
<evidence type="ECO:0000255" key="3"/>
<evidence type="ECO:0000305" key="4"/>
<gene>
    <name evidence="1" type="primary">ABHD4</name>
</gene>